<organism>
    <name type="scientific">Mus musculus</name>
    <name type="common">Mouse</name>
    <dbReference type="NCBI Taxonomy" id="10090"/>
    <lineage>
        <taxon>Eukaryota</taxon>
        <taxon>Metazoa</taxon>
        <taxon>Chordata</taxon>
        <taxon>Craniata</taxon>
        <taxon>Vertebrata</taxon>
        <taxon>Euteleostomi</taxon>
        <taxon>Mammalia</taxon>
        <taxon>Eutheria</taxon>
        <taxon>Euarchontoglires</taxon>
        <taxon>Glires</taxon>
        <taxon>Rodentia</taxon>
        <taxon>Myomorpha</taxon>
        <taxon>Muroidea</taxon>
        <taxon>Muridae</taxon>
        <taxon>Murinae</taxon>
        <taxon>Mus</taxon>
        <taxon>Mus</taxon>
    </lineage>
</organism>
<accession>Q61644</accession>
<reference key="1">
    <citation type="journal article" date="1998" name="Eur. J. Biochem.">
        <title>PACSIN, a brain protein that is upregulated upon differentiation into neuronal cells.</title>
        <authorList>
            <person name="Plomann M."/>
            <person name="Lange R."/>
            <person name="Vopper G."/>
            <person name="Cremer H."/>
            <person name="Heinlein U.A.O."/>
            <person name="Scheff S."/>
            <person name="Baldwin S.A."/>
            <person name="Leitges M."/>
            <person name="Cramer M."/>
            <person name="Paulsson M."/>
            <person name="Barthels D."/>
        </authorList>
    </citation>
    <scope>NUCLEOTIDE SEQUENCE [MRNA]</scope>
    <scope>TISSUE SPECIFICITY</scope>
    <source>
        <strain>C57BL/6J</strain>
        <tissue>Cerebellum</tissue>
    </source>
</reference>
<reference key="2">
    <citation type="journal article" date="2004" name="Genome Res.">
        <title>The status, quality, and expansion of the NIH full-length cDNA project: the Mammalian Gene Collection (MGC).</title>
        <authorList>
            <consortium name="The MGC Project Team"/>
        </authorList>
    </citation>
    <scope>NUCLEOTIDE SEQUENCE [LARGE SCALE MRNA]</scope>
    <source>
        <tissue>Eye</tissue>
    </source>
</reference>
<reference key="3">
    <citation type="submission" date="2007-04" db="UniProtKB">
        <authorList>
            <person name="Lubec G."/>
            <person name="Kang S.U."/>
        </authorList>
    </citation>
    <scope>PROTEIN SEQUENCE OF 52-62; 71-79; 319-341 AND 425-441</scope>
    <scope>IDENTIFICATION BY MASS SPECTROMETRY</scope>
    <source>
        <strain>C57BL/6J</strain>
        <tissue>Brain</tissue>
    </source>
</reference>
<reference key="4">
    <citation type="journal article" date="2000" name="J. Cell Sci.">
        <title>All three PACSIN isoforms bind to endocytic proteins and inhibit endocytosis.</title>
        <authorList>
            <person name="Modregger J."/>
            <person name="Ritter B."/>
            <person name="Witter B."/>
            <person name="Paulsson M."/>
            <person name="Plomann M."/>
        </authorList>
    </citation>
    <scope>FUNCTION</scope>
    <scope>INTERACTION WITH DNM1; SYNJ1 AND WASL</scope>
    <scope>HOMOOLIGOMERIZATION</scope>
    <scope>HETEROOLIGOMERIZATION WITH PACSIN2 AND PACSIN3</scope>
    <scope>TISSUE SPECIFICITY</scope>
    <scope>MUTAGENESIS OF PRO-434</scope>
</reference>
<reference key="5">
    <citation type="journal article" date="2005" name="Mol. Biol. Cell">
        <title>EHD proteins associate with syndapin I and II and such interactions play a crucial role in endosomal recycling.</title>
        <authorList>
            <person name="Braun A."/>
            <person name="Pinyol R."/>
            <person name="Dahlhaus R."/>
            <person name="Koch D."/>
            <person name="Fonarev P."/>
            <person name="Grant B.D."/>
            <person name="Kessels M.M."/>
            <person name="Qualmann B."/>
        </authorList>
    </citation>
    <scope>INTERACTION WITH EHD1</scope>
</reference>
<reference key="6">
    <citation type="journal article" date="2006" name="J. Biol. Chem.">
        <title>PACSINs bind to the TRPV4 cation channel. PACSIN 3 modulates the subcellular localization of TRPV4.</title>
        <authorList>
            <person name="Cuajungco M.P."/>
            <person name="Grimm C."/>
            <person name="Oshima K."/>
            <person name="D'hoedt D."/>
            <person name="Nilius B."/>
            <person name="Mensenkamp A.R."/>
            <person name="Bindels R.J."/>
            <person name="Plomann M."/>
            <person name="Heller S."/>
        </authorList>
    </citation>
    <scope>INTERACTION WITH TRPV4</scope>
</reference>
<reference key="7">
    <citation type="journal article" date="2008" name="J. Proteome Res.">
        <title>Large-scale identification and evolution indexing of tyrosine phosphorylation sites from murine brain.</title>
        <authorList>
            <person name="Ballif B.A."/>
            <person name="Carey G.R."/>
            <person name="Sunyaev S.R."/>
            <person name="Gygi S.P."/>
        </authorList>
    </citation>
    <scope>PHOSPHORYLATION [LARGE SCALE ANALYSIS] AT TYR-391</scope>
    <scope>IDENTIFICATION BY MASS SPECTROMETRY [LARGE SCALE ANALYSIS]</scope>
    <source>
        <tissue>Brain</tissue>
    </source>
</reference>
<reference key="8">
    <citation type="journal article" date="2010" name="Cell">
        <title>A tissue-specific atlas of mouse protein phosphorylation and expression.</title>
        <authorList>
            <person name="Huttlin E.L."/>
            <person name="Jedrychowski M.P."/>
            <person name="Elias J.E."/>
            <person name="Goswami T."/>
            <person name="Rad R."/>
            <person name="Beausoleil S.A."/>
            <person name="Villen J."/>
            <person name="Haas W."/>
            <person name="Sowa M.E."/>
            <person name="Gygi S.P."/>
        </authorList>
    </citation>
    <scope>PHOSPHORYLATION [LARGE SCALE ANALYSIS] AT SER-343; SER-345; SER-358; SER-402 AND SER-427</scope>
    <scope>IDENTIFICATION BY MASS SPECTROMETRY [LARGE SCALE ANALYSIS]</scope>
    <source>
        <tissue>Brain</tissue>
        <tissue>Lung</tissue>
        <tissue>Spleen</tissue>
    </source>
</reference>
<reference key="9">
    <citation type="journal article" date="2011" name="EMBO J.">
        <title>Proper synaptic vesicle formation and neuronal network activity critically rely on syndapin I.</title>
        <authorList>
            <person name="Koch D."/>
            <person name="Spiwoks-Becker I."/>
            <person name="Sabanov V."/>
            <person name="Sinning A."/>
            <person name="Dugladze T."/>
            <person name="Stellmacher A."/>
            <person name="Ahuja R."/>
            <person name="Grimm J."/>
            <person name="Schuler S."/>
            <person name="Muller A."/>
            <person name="Angenstein F."/>
            <person name="Ahmed T."/>
            <person name="Diesler A."/>
            <person name="Moser M."/>
            <person name="Tom Dieck S."/>
            <person name="Spessert R."/>
            <person name="Boeckers T.M."/>
            <person name="Fassler R."/>
            <person name="Hubner C.A."/>
            <person name="Balschun D."/>
            <person name="Gloveli T."/>
            <person name="Kessels M.M."/>
            <person name="Qualmann B."/>
        </authorList>
    </citation>
    <scope>FUNCTION</scope>
    <scope>DISRUPTION PHENOTYPE</scope>
    <scope>INTERACTION WITH DNM1; DNM2 AND DNM3</scope>
    <scope>SUBCELLULAR LOCATION</scope>
    <scope>TISSUE SPECIFICITY</scope>
</reference>
<reference key="10">
    <citation type="journal article" date="2012" name="J. Biol. Chem.">
        <title>PACSIN1, a Tau-interacting protein, regulates axonal elongation and branching by facilitating microtubule instability.</title>
        <authorList>
            <person name="Liu Y."/>
            <person name="Lv K."/>
            <person name="Li Z."/>
            <person name="Yu A.C."/>
            <person name="Chen J."/>
            <person name="Teng J."/>
        </authorList>
    </citation>
    <scope>FUNCTION</scope>
    <scope>INTERACTION WITH MAPT</scope>
    <scope>MUTAGENESIS OF PRO-434</scope>
    <scope>TISSUE SPECIFICITY</scope>
</reference>
<reference key="11">
    <citation type="journal article" date="2010" name="Proc. Natl. Acad. Sci. U.S.A.">
        <title>Molecular basis for SH3 domain regulation of F-BAR-mediated membrane deformation.</title>
        <authorList>
            <person name="Rao Y."/>
            <person name="Ma Q."/>
            <person name="Vahedi-Faridi A."/>
            <person name="Sundborger A."/>
            <person name="Pechstein A."/>
            <person name="Puchkov D."/>
            <person name="Luo L."/>
            <person name="Shupliakov O."/>
            <person name="Saenger W."/>
            <person name="Haucke V."/>
        </authorList>
    </citation>
    <scope>X-RAY CRYSTALLOGRAPHY (2.45 ANGSTROMS) OF 1-337</scope>
    <scope>SUBCELLULAR LOCATION</scope>
    <scope>FUNCTION</scope>
    <scope>SUBUNIT</scope>
    <scope>INTERACTION WITH DNM1</scope>
    <scope>MUTAGENESIS OF 122-ILE-MET-123; LYS-127; LYS-130; 145-LYS--LYS-148 AND PRO-434</scope>
    <scope>DOMAIN</scope>
    <scope>IDENTIFICATION BY MASS SPECTROMETRY</scope>
</reference>
<name>PACN1_MOUSE</name>
<protein>
    <recommendedName>
        <fullName>Protein kinase C and casein kinase substrate in neurons protein 1</fullName>
    </recommendedName>
    <alternativeName>
        <fullName>Syndapin-1</fullName>
    </alternativeName>
</protein>
<feature type="chain" id="PRO_0000161793" description="Protein kinase C and casein kinase substrate in neurons protein 1">
    <location>
        <begin position="1"/>
        <end position="441"/>
    </location>
</feature>
<feature type="domain" description="F-BAR" evidence="4">
    <location>
        <begin position="10"/>
        <end position="280"/>
    </location>
</feature>
<feature type="domain" description="SH3" evidence="3">
    <location>
        <begin position="382"/>
        <end position="441"/>
    </location>
</feature>
<feature type="region of interest" description="Disordered" evidence="5">
    <location>
        <begin position="297"/>
        <end position="380"/>
    </location>
</feature>
<feature type="coiled-coil region">
    <location>
        <begin position="23"/>
        <end position="272"/>
    </location>
</feature>
<feature type="compositionally biased region" description="Basic and acidic residues" evidence="5">
    <location>
        <begin position="311"/>
        <end position="321"/>
    </location>
</feature>
<feature type="compositionally biased region" description="Polar residues" evidence="5">
    <location>
        <begin position="324"/>
        <end position="355"/>
    </location>
</feature>
<feature type="modified residue" description="Phosphoserine" evidence="2">
    <location>
        <position position="2"/>
    </location>
</feature>
<feature type="modified residue" description="Phosphoserine" evidence="2">
    <location>
        <position position="76"/>
    </location>
</feature>
<feature type="modified residue" description="Phosphothreonine" evidence="2">
    <location>
        <position position="181"/>
    </location>
</feature>
<feature type="modified residue" description="Phosphoserine" evidence="15">
    <location>
        <position position="343"/>
    </location>
</feature>
<feature type="modified residue" description="Phosphoserine" evidence="15">
    <location>
        <position position="345"/>
    </location>
</feature>
<feature type="modified residue" description="Phosphoserine" evidence="2">
    <location>
        <position position="346"/>
    </location>
</feature>
<feature type="modified residue" description="Phosphoserine" evidence="15">
    <location>
        <position position="358"/>
    </location>
</feature>
<feature type="modified residue" description="Phosphoserine" evidence="2">
    <location>
        <position position="362"/>
    </location>
</feature>
<feature type="modified residue" description="Phosphotyrosine" evidence="14">
    <location>
        <position position="391"/>
    </location>
</feature>
<feature type="modified residue" description="Phosphoserine" evidence="15">
    <location>
        <position position="402"/>
    </location>
</feature>
<feature type="modified residue" description="Phosphoserine" evidence="15">
    <location>
        <position position="427"/>
    </location>
</feature>
<feature type="mutagenesis site" description="Increases membrane tubulation." evidence="9">
    <original>IM</original>
    <variation>FF</variation>
    <location>
        <begin position="122"/>
        <end position="123"/>
    </location>
</feature>
<feature type="mutagenesis site" description="Abolishes membrane tubulation. No effect on phospholipid binding." evidence="9">
    <original>IM</original>
    <variation>QQ</variation>
    <location>
        <begin position="122"/>
        <end position="123"/>
    </location>
</feature>
<feature type="mutagenesis site" description="Abolishes membrane tubulation; when associated with E-130." evidence="9">
    <original>K</original>
    <variation>E</variation>
    <location>
        <position position="127"/>
    </location>
</feature>
<feature type="mutagenesis site" description="Abolishes membrane tubulation; when associated with E-127." evidence="9">
    <original>K</original>
    <variation>E</variation>
    <location>
        <position position="130"/>
    </location>
</feature>
<feature type="mutagenesis site" description="Abolishes membrane tubulation." evidence="9">
    <original>KKMK</original>
    <variation>EEME</variation>
    <location>
        <begin position="145"/>
        <end position="148"/>
    </location>
</feature>
<feature type="mutagenesis site" description="Impairs interaction with DNM1.">
    <original>E</original>
    <variation>R</variation>
    <location>
        <position position="400"/>
    </location>
</feature>
<feature type="mutagenesis site" description="Abolishes interaction with DNM1, MAPT, SYNJ1 and WASL." evidence="6 9 11">
    <original>P</original>
    <variation>L</variation>
    <location>
        <position position="434"/>
    </location>
</feature>
<feature type="turn" evidence="16">
    <location>
        <begin position="19"/>
        <end position="22"/>
    </location>
</feature>
<feature type="helix" evidence="16">
    <location>
        <begin position="23"/>
        <end position="70"/>
    </location>
</feature>
<feature type="helix" evidence="16">
    <location>
        <begin position="75"/>
        <end position="104"/>
    </location>
</feature>
<feature type="helix" evidence="16">
    <location>
        <begin position="106"/>
        <end position="117"/>
    </location>
</feature>
<feature type="strand" evidence="17">
    <location>
        <begin position="124"/>
        <end position="126"/>
    </location>
</feature>
<feature type="helix" evidence="16">
    <location>
        <begin position="127"/>
        <end position="175"/>
    </location>
</feature>
<feature type="strand" evidence="16">
    <location>
        <begin position="176"/>
        <end position="178"/>
    </location>
</feature>
<feature type="helix" evidence="16">
    <location>
        <begin position="182"/>
        <end position="253"/>
    </location>
</feature>
<feature type="helix" evidence="16">
    <location>
        <begin position="255"/>
        <end position="257"/>
    </location>
</feature>
<feature type="helix" evidence="16">
    <location>
        <begin position="260"/>
        <end position="274"/>
    </location>
</feature>
<feature type="helix" evidence="16">
    <location>
        <begin position="277"/>
        <end position="288"/>
    </location>
</feature>
<feature type="strand" evidence="17">
    <location>
        <begin position="386"/>
        <end position="389"/>
    </location>
</feature>
<feature type="strand" evidence="17">
    <location>
        <begin position="396"/>
        <end position="400"/>
    </location>
</feature>
<feature type="strand" evidence="17">
    <location>
        <begin position="408"/>
        <end position="411"/>
    </location>
</feature>
<feature type="strand" evidence="17">
    <location>
        <begin position="417"/>
        <end position="424"/>
    </location>
</feature>
<feature type="strand" evidence="17">
    <location>
        <begin position="430"/>
        <end position="434"/>
    </location>
</feature>
<feature type="helix" evidence="17">
    <location>
        <begin position="435"/>
        <end position="437"/>
    </location>
</feature>
<comment type="function">
    <text evidence="6 9 10 11">Binds to membranes via its F-BAR domain and mediates membrane tubulation. Plays a role in the reorganization of the microtubule cytoskeleton via its interaction with MAPT; this decreases microtubule stability and inhibits MAPT-induced microtubule polymerization. Plays a role in cellular transport processes by recruiting DNM1, DNM2 and DNM3 to membranes. Plays a role in the reorganization of the actin cytoskeleton and in neuron morphogenesis via its interaction with COBL and WASL, and by recruiting COBL to the cell cortex. Plays a role in the regulation of neurite formation, neurite branching and the regulation of neurite length. Required for normal synaptic vesicle endocytosis; this process retrieves previously released neurotransmitters to accommodate multiple cycles of neurotransmission. Required for normal excitatory and inhibitory synaptic transmission.</text>
</comment>
<comment type="subunit">
    <text evidence="1 6 7 8 9 10 11">Homodimer. May form heterooligomers with other PACSINs. Interacts with both COBL and DBNL. Identified in a complex composed of COBL, PACSIN1 and WASL. Interacts with EHD3 (By similarity). Interacts (via SH3 domain) with SYNJ1 and WASL. Interacts (via SH3 domain) with DNM1; the interaction is reduced by DNM1 phosphorylation. Interacts with DNM2 and DNM3. Interacts with MAPT. Interacts with EHD1. Interacts with TRPV4.</text>
</comment>
<comment type="interaction">
    <interactant intactId="EBI-2255561">
        <id>Q61644</id>
    </interactant>
    <interactant intactId="EBI-774043">
        <id>P10637</id>
        <label>Mapt</label>
    </interactant>
    <organismsDiffer>false</organismsDiffer>
    <experiments>5</experiments>
</comment>
<comment type="interaction">
    <interactant intactId="EBI-2255561">
        <id>Q61644</id>
    </interactant>
    <interactant intactId="EBI-2255561">
        <id>Q61644</id>
        <label>Pacsin1</label>
    </interactant>
    <organismsDiffer>false</organismsDiffer>
    <experiments>3</experiments>
</comment>
<comment type="interaction">
    <interactant intactId="EBI-2255561">
        <id>Q61644</id>
    </interactant>
    <interactant intactId="EBI-8758676">
        <id>P19332-5</id>
        <label>Mapt</label>
    </interactant>
    <organismsDiffer>true</organismsDiffer>
    <experiments>6</experiments>
</comment>
<comment type="subcellular location">
    <subcellularLocation>
        <location>Cytoplasm</location>
    </subcellularLocation>
    <subcellularLocation>
        <location evidence="1">Cell projection</location>
    </subcellularLocation>
    <subcellularLocation>
        <location evidence="1">Synapse</location>
        <location evidence="1">Synaptosome</location>
    </subcellularLocation>
    <subcellularLocation>
        <location>Cell projection</location>
        <location>Ruffle membrane</location>
    </subcellularLocation>
    <subcellularLocation>
        <location>Membrane</location>
        <topology>Peripheral membrane protein</topology>
    </subcellularLocation>
    <subcellularLocation>
        <location>Cytoplasmic vesicle membrane</location>
        <topology>Peripheral membrane protein</topology>
    </subcellularLocation>
    <subcellularLocation>
        <location>Synapse</location>
    </subcellularLocation>
    <subcellularLocation>
        <location>Cytoplasm</location>
        <location>Cytosol</location>
    </subcellularLocation>
    <subcellularLocation>
        <location evidence="1">Cell membrane</location>
        <topology evidence="1">Peripheral membrane protein</topology>
        <orientation evidence="1">Cytoplasmic side</orientation>
    </subcellularLocation>
    <text evidence="1">In primary neuronal cultures, present at a high level in presynaptic nerve terminals and in the cell body. Colocalizes with DNM1 at vesicular structures in the cell body and neurites (By similarity). Colocalizes with MAPT in axons.</text>
</comment>
<comment type="tissue specificity">
    <text evidence="6 10 11 12">Highly expressed in brain. Detected in hippocampus and dorsal root ganglion neurons. Detected in rod photoreceptor terminals in the outer plexiform layer of the retina (at protein level). In CNS neurons, high levels in the pyramidal cells of the hippocampus, Purkinje cells of the cerebellum and large neurons of the cortex and brain stem.</text>
</comment>
<comment type="developmental stage">
    <text>Expression is seen at embryonic day 17 and is up-regulated developmentally with a correlation to neuronal differentiation.</text>
</comment>
<comment type="domain">
    <text evidence="9">The F-BAR domain forms a coiled coil and mediates membrane-binding and membrane tubulation. In the autoinhibited conformation, interaction with the SH3 domain inhibits membrane tubulation mediated by the F-BAR domain. DNM1 binding abolishes autoinhibition.</text>
</comment>
<comment type="PTM">
    <text>Phosphorylated by casein kinase 2 (CK2) and protein kinase C (PKC).</text>
</comment>
<comment type="disruption phenotype">
    <text evidence="10">Mice are born at the expected Mendelian rate, but display a slightly reduced body weight and reduced fertility. Mice display increased synaptic vesicle diameter and impaired compensatory synaptic vesicle endocytosis after high synapse activity. Rod photoreceptor ribbon synapses display an abnormally high number of endosome-like structures and tubular elements after light exposure. Mice display defects in excitatory and inhibitory synaptic transmission in the hippocampus, and display a tendency to seizures when confronted with novelty.</text>
</comment>
<comment type="similarity">
    <text evidence="13">Belongs to the PACSIN family.</text>
</comment>
<dbReference type="EMBL" id="X85124">
    <property type="protein sequence ID" value="CAA59437.1"/>
    <property type="molecule type" value="mRNA"/>
</dbReference>
<dbReference type="EMBL" id="BC014698">
    <property type="protein sequence ID" value="AAH14698.1"/>
    <property type="molecule type" value="mRNA"/>
</dbReference>
<dbReference type="CCDS" id="CCDS28567.1"/>
<dbReference type="RefSeq" id="NP_001273672.1">
    <property type="nucleotide sequence ID" value="NM_001286743.1"/>
</dbReference>
<dbReference type="RefSeq" id="NP_001273673.1">
    <property type="nucleotide sequence ID" value="NM_001286744.1"/>
</dbReference>
<dbReference type="RefSeq" id="NP_035991.1">
    <property type="nucleotide sequence ID" value="NM_011861.3"/>
</dbReference>
<dbReference type="RefSeq" id="NP_848142.1">
    <property type="nucleotide sequence ID" value="NM_178365.4"/>
</dbReference>
<dbReference type="RefSeq" id="XP_006524289.1">
    <property type="nucleotide sequence ID" value="XM_006524226.4"/>
</dbReference>
<dbReference type="RefSeq" id="XP_011244733.1">
    <property type="nucleotide sequence ID" value="XM_011246431.3"/>
</dbReference>
<dbReference type="PDB" id="2X3V">
    <property type="method" value="X-ray"/>
    <property type="resolution" value="2.45 A"/>
    <property type="chains" value="A/B/C=1-337"/>
</dbReference>
<dbReference type="PDB" id="2X3W">
    <property type="method" value="X-ray"/>
    <property type="resolution" value="2.64 A"/>
    <property type="chains" value="A/B/C=1-337, D=382-441"/>
</dbReference>
<dbReference type="PDB" id="2X3X">
    <property type="method" value="X-ray"/>
    <property type="resolution" value="3.35 A"/>
    <property type="chains" value="A/B/C=1-337, D/E=382-441"/>
</dbReference>
<dbReference type="PDBsum" id="2X3V"/>
<dbReference type="PDBsum" id="2X3W"/>
<dbReference type="PDBsum" id="2X3X"/>
<dbReference type="SMR" id="Q61644"/>
<dbReference type="BioGRID" id="204830">
    <property type="interactions" value="18"/>
</dbReference>
<dbReference type="DIP" id="DIP-53108N"/>
<dbReference type="FunCoup" id="Q61644">
    <property type="interactions" value="611"/>
</dbReference>
<dbReference type="IntAct" id="Q61644">
    <property type="interactions" value="12"/>
</dbReference>
<dbReference type="MINT" id="Q61644"/>
<dbReference type="STRING" id="10090.ENSMUSP00000155999"/>
<dbReference type="GlyGen" id="Q61644">
    <property type="glycosylation" value="5 sites, 2 N-linked glycans (2 sites), 1 O-linked glycan (3 sites)"/>
</dbReference>
<dbReference type="iPTMnet" id="Q61644"/>
<dbReference type="PhosphoSitePlus" id="Q61644"/>
<dbReference type="SwissPalm" id="Q61644"/>
<dbReference type="jPOST" id="Q61644"/>
<dbReference type="PaxDb" id="10090-ENSMUSP00000044168"/>
<dbReference type="ProteomicsDB" id="294098"/>
<dbReference type="Pumba" id="Q61644"/>
<dbReference type="Antibodypedia" id="4091">
    <property type="antibodies" value="265 antibodies from 33 providers"/>
</dbReference>
<dbReference type="DNASU" id="23969"/>
<dbReference type="Ensembl" id="ENSMUST00000045896.11">
    <property type="protein sequence ID" value="ENSMUSP00000044168.4"/>
    <property type="gene ID" value="ENSMUSG00000040276.16"/>
</dbReference>
<dbReference type="Ensembl" id="ENSMUST00000097360.3">
    <property type="protein sequence ID" value="ENSMUSP00000094973.3"/>
    <property type="gene ID" value="ENSMUSG00000040276.16"/>
</dbReference>
<dbReference type="Ensembl" id="ENSMUST00000114873.8">
    <property type="protein sequence ID" value="ENSMUSP00000110523.2"/>
    <property type="gene ID" value="ENSMUSG00000040276.16"/>
</dbReference>
<dbReference type="Ensembl" id="ENSMUST00000231669.2">
    <property type="protein sequence ID" value="ENSMUSP00000156003.2"/>
    <property type="gene ID" value="ENSMUSG00000040276.16"/>
</dbReference>
<dbReference type="Ensembl" id="ENSMUST00000232437.2">
    <property type="protein sequence ID" value="ENSMUSP00000155999.2"/>
    <property type="gene ID" value="ENSMUSG00000040276.16"/>
</dbReference>
<dbReference type="GeneID" id="23969"/>
<dbReference type="KEGG" id="mmu:23969"/>
<dbReference type="UCSC" id="uc008bpj.2">
    <property type="organism name" value="mouse"/>
</dbReference>
<dbReference type="AGR" id="MGI:1345181"/>
<dbReference type="CTD" id="29993"/>
<dbReference type="MGI" id="MGI:1345181">
    <property type="gene designation" value="Pacsin1"/>
</dbReference>
<dbReference type="VEuPathDB" id="HostDB:ENSMUSG00000040276"/>
<dbReference type="eggNOG" id="KOG2856">
    <property type="taxonomic scope" value="Eukaryota"/>
</dbReference>
<dbReference type="GeneTree" id="ENSGT00950000182973"/>
<dbReference type="HOGENOM" id="CLU_030752_0_0_1"/>
<dbReference type="InParanoid" id="Q61644"/>
<dbReference type="OMA" id="ACQMKEL"/>
<dbReference type="OrthoDB" id="10255128at2759"/>
<dbReference type="PhylomeDB" id="Q61644"/>
<dbReference type="TreeFam" id="TF313677"/>
<dbReference type="Reactome" id="R-MMU-8856828">
    <property type="pathway name" value="Clathrin-mediated endocytosis"/>
</dbReference>
<dbReference type="BioGRID-ORCS" id="23969">
    <property type="hits" value="1 hit in 78 CRISPR screens"/>
</dbReference>
<dbReference type="CD-CODE" id="01CA17F3">
    <property type="entry name" value="Centrosome"/>
</dbReference>
<dbReference type="CD-CODE" id="CE726F99">
    <property type="entry name" value="Postsynaptic density"/>
</dbReference>
<dbReference type="ChiTaRS" id="Pacsin1">
    <property type="organism name" value="mouse"/>
</dbReference>
<dbReference type="EvolutionaryTrace" id="Q61644"/>
<dbReference type="PRO" id="PR:Q61644"/>
<dbReference type="Proteomes" id="UP000000589">
    <property type="component" value="Chromosome 17"/>
</dbReference>
<dbReference type="RNAct" id="Q61644">
    <property type="molecule type" value="protein"/>
</dbReference>
<dbReference type="Bgee" id="ENSMUSG00000040276">
    <property type="expression patterns" value="Expressed in pontine nuclear group and 146 other cell types or tissues"/>
</dbReference>
<dbReference type="ExpressionAtlas" id="Q61644">
    <property type="expression patterns" value="baseline and differential"/>
</dbReference>
<dbReference type="GO" id="GO:0043679">
    <property type="term" value="C:axon terminus"/>
    <property type="evidence" value="ECO:0000250"/>
    <property type="project" value="UniProtKB"/>
</dbReference>
<dbReference type="GO" id="GO:0030137">
    <property type="term" value="C:COPI-coated vesicle"/>
    <property type="evidence" value="ECO:0000314"/>
    <property type="project" value="MGI"/>
</dbReference>
<dbReference type="GO" id="GO:0005737">
    <property type="term" value="C:cytoplasm"/>
    <property type="evidence" value="ECO:0000314"/>
    <property type="project" value="UniProtKB"/>
</dbReference>
<dbReference type="GO" id="GO:0030659">
    <property type="term" value="C:cytoplasmic vesicle membrane"/>
    <property type="evidence" value="ECO:0007669"/>
    <property type="project" value="UniProtKB-SubCell"/>
</dbReference>
<dbReference type="GO" id="GO:0005829">
    <property type="term" value="C:cytosol"/>
    <property type="evidence" value="ECO:0007669"/>
    <property type="project" value="UniProtKB-SubCell"/>
</dbReference>
<dbReference type="GO" id="GO:0043209">
    <property type="term" value="C:myelin sheath"/>
    <property type="evidence" value="ECO:0007005"/>
    <property type="project" value="UniProtKB"/>
</dbReference>
<dbReference type="GO" id="GO:0098684">
    <property type="term" value="C:photoreceptor ribbon synapse"/>
    <property type="evidence" value="ECO:0000314"/>
    <property type="project" value="SynGO"/>
</dbReference>
<dbReference type="GO" id="GO:0098833">
    <property type="term" value="C:presynaptic endocytic zone"/>
    <property type="evidence" value="ECO:0000314"/>
    <property type="project" value="SynGO"/>
</dbReference>
<dbReference type="GO" id="GO:0032587">
    <property type="term" value="C:ruffle membrane"/>
    <property type="evidence" value="ECO:0000314"/>
    <property type="project" value="UniProtKB"/>
</dbReference>
<dbReference type="GO" id="GO:0008092">
    <property type="term" value="F:cytoskeletal protein binding"/>
    <property type="evidence" value="ECO:0000314"/>
    <property type="project" value="MGI"/>
</dbReference>
<dbReference type="GO" id="GO:0042802">
    <property type="term" value="F:identical protein binding"/>
    <property type="evidence" value="ECO:0000353"/>
    <property type="project" value="IntAct"/>
</dbReference>
<dbReference type="GO" id="GO:0005543">
    <property type="term" value="F:phospholipid binding"/>
    <property type="evidence" value="ECO:0000314"/>
    <property type="project" value="UniProtKB"/>
</dbReference>
<dbReference type="GO" id="GO:0007015">
    <property type="term" value="P:actin filament organization"/>
    <property type="evidence" value="ECO:0007669"/>
    <property type="project" value="InterPro"/>
</dbReference>
<dbReference type="GO" id="GO:0045806">
    <property type="term" value="P:negative regulation of endocytosis"/>
    <property type="evidence" value="ECO:0000314"/>
    <property type="project" value="MGI"/>
</dbReference>
<dbReference type="GO" id="GO:0048812">
    <property type="term" value="P:neuron projection morphogenesis"/>
    <property type="evidence" value="ECO:0000250"/>
    <property type="project" value="UniProtKB"/>
</dbReference>
<dbReference type="GO" id="GO:0097320">
    <property type="term" value="P:plasma membrane tubulation"/>
    <property type="evidence" value="ECO:0000315"/>
    <property type="project" value="UniProtKB"/>
</dbReference>
<dbReference type="GO" id="GO:0072657">
    <property type="term" value="P:protein localization to membrane"/>
    <property type="evidence" value="ECO:0000315"/>
    <property type="project" value="UniProtKB"/>
</dbReference>
<dbReference type="GO" id="GO:0007165">
    <property type="term" value="P:signal transduction"/>
    <property type="evidence" value="ECO:0000304"/>
    <property type="project" value="MGI"/>
</dbReference>
<dbReference type="GO" id="GO:0048488">
    <property type="term" value="P:synaptic vesicle endocytosis"/>
    <property type="evidence" value="ECO:0000314"/>
    <property type="project" value="SynGO"/>
</dbReference>
<dbReference type="CDD" id="cd07680">
    <property type="entry name" value="F-BAR_PACSIN1"/>
    <property type="match status" value="1"/>
</dbReference>
<dbReference type="CDD" id="cd11998">
    <property type="entry name" value="SH3_PACSIN1-2"/>
    <property type="match status" value="1"/>
</dbReference>
<dbReference type="FunFam" id="2.30.30.40:FF:000014">
    <property type="entry name" value="Kinase C and casein kinase substrate in neurons protein"/>
    <property type="match status" value="1"/>
</dbReference>
<dbReference type="FunFam" id="1.20.1270.60:FF:000205">
    <property type="entry name" value="Protein kinase C and casein kinase substrate in neurons protein 1"/>
    <property type="match status" value="1"/>
</dbReference>
<dbReference type="Gene3D" id="1.20.1270.60">
    <property type="entry name" value="Arfaptin homology (AH) domain/BAR domain"/>
    <property type="match status" value="1"/>
</dbReference>
<dbReference type="Gene3D" id="2.30.30.40">
    <property type="entry name" value="SH3 Domains"/>
    <property type="match status" value="1"/>
</dbReference>
<dbReference type="InterPro" id="IPR027267">
    <property type="entry name" value="AH/BAR_dom_sf"/>
</dbReference>
<dbReference type="InterPro" id="IPR031160">
    <property type="entry name" value="F_BAR"/>
</dbReference>
<dbReference type="InterPro" id="IPR001060">
    <property type="entry name" value="FCH_dom"/>
</dbReference>
<dbReference type="InterPro" id="IPR035743">
    <property type="entry name" value="PACSIN1/PACSIN2_SH3"/>
</dbReference>
<dbReference type="InterPro" id="IPR037454">
    <property type="entry name" value="PACSIN1_F-BAR"/>
</dbReference>
<dbReference type="InterPro" id="IPR036028">
    <property type="entry name" value="SH3-like_dom_sf"/>
</dbReference>
<dbReference type="InterPro" id="IPR001452">
    <property type="entry name" value="SH3_domain"/>
</dbReference>
<dbReference type="PANTHER" id="PTHR23065">
    <property type="entry name" value="PROLINE-SERINE-THREONINE PHOSPHATASE INTERACTING PROTEIN 1"/>
    <property type="match status" value="1"/>
</dbReference>
<dbReference type="PANTHER" id="PTHR23065:SF16">
    <property type="entry name" value="PROTEIN KINASE C AND CASEIN KINASE SUBSTRATE IN NEURONS PROTEIN 1"/>
    <property type="match status" value="1"/>
</dbReference>
<dbReference type="Pfam" id="PF00611">
    <property type="entry name" value="FCH"/>
    <property type="match status" value="1"/>
</dbReference>
<dbReference type="Pfam" id="PF14604">
    <property type="entry name" value="SH3_9"/>
    <property type="match status" value="1"/>
</dbReference>
<dbReference type="PRINTS" id="PR00452">
    <property type="entry name" value="SH3DOMAIN"/>
</dbReference>
<dbReference type="SMART" id="SM00055">
    <property type="entry name" value="FCH"/>
    <property type="match status" value="1"/>
</dbReference>
<dbReference type="SMART" id="SM00326">
    <property type="entry name" value="SH3"/>
    <property type="match status" value="1"/>
</dbReference>
<dbReference type="SUPFAM" id="SSF103657">
    <property type="entry name" value="BAR/IMD domain-like"/>
    <property type="match status" value="1"/>
</dbReference>
<dbReference type="SUPFAM" id="SSF50044">
    <property type="entry name" value="SH3-domain"/>
    <property type="match status" value="1"/>
</dbReference>
<dbReference type="PROSITE" id="PS51741">
    <property type="entry name" value="F_BAR"/>
    <property type="match status" value="1"/>
</dbReference>
<dbReference type="PROSITE" id="PS50002">
    <property type="entry name" value="SH3"/>
    <property type="match status" value="1"/>
</dbReference>
<evidence type="ECO:0000250" key="1"/>
<evidence type="ECO:0000250" key="2">
    <source>
        <dbReference type="UniProtKB" id="Q9Z0W5"/>
    </source>
</evidence>
<evidence type="ECO:0000255" key="3">
    <source>
        <dbReference type="PROSITE-ProRule" id="PRU00192"/>
    </source>
</evidence>
<evidence type="ECO:0000255" key="4">
    <source>
        <dbReference type="PROSITE-ProRule" id="PRU01077"/>
    </source>
</evidence>
<evidence type="ECO:0000256" key="5">
    <source>
        <dbReference type="SAM" id="MobiDB-lite"/>
    </source>
</evidence>
<evidence type="ECO:0000269" key="6">
    <source>
    </source>
</evidence>
<evidence type="ECO:0000269" key="7">
    <source>
    </source>
</evidence>
<evidence type="ECO:0000269" key="8">
    <source>
    </source>
</evidence>
<evidence type="ECO:0000269" key="9">
    <source>
    </source>
</evidence>
<evidence type="ECO:0000269" key="10">
    <source>
    </source>
</evidence>
<evidence type="ECO:0000269" key="11">
    <source>
    </source>
</evidence>
<evidence type="ECO:0000269" key="12">
    <source>
    </source>
</evidence>
<evidence type="ECO:0000305" key="13"/>
<evidence type="ECO:0007744" key="14">
    <source>
    </source>
</evidence>
<evidence type="ECO:0007744" key="15">
    <source>
    </source>
</evidence>
<evidence type="ECO:0007829" key="16">
    <source>
        <dbReference type="PDB" id="2X3V"/>
    </source>
</evidence>
<evidence type="ECO:0007829" key="17">
    <source>
        <dbReference type="PDB" id="2X3W"/>
    </source>
</evidence>
<proteinExistence type="evidence at protein level"/>
<keyword id="KW-0002">3D-structure</keyword>
<keyword id="KW-1003">Cell membrane</keyword>
<keyword id="KW-0966">Cell projection</keyword>
<keyword id="KW-0175">Coiled coil</keyword>
<keyword id="KW-0963">Cytoplasm</keyword>
<keyword id="KW-0968">Cytoplasmic vesicle</keyword>
<keyword id="KW-0903">Direct protein sequencing</keyword>
<keyword id="KW-0254">Endocytosis</keyword>
<keyword id="KW-0446">Lipid-binding</keyword>
<keyword id="KW-0472">Membrane</keyword>
<keyword id="KW-0597">Phosphoprotein</keyword>
<keyword id="KW-1185">Reference proteome</keyword>
<keyword id="KW-0728">SH3 domain</keyword>
<keyword id="KW-0770">Synapse</keyword>
<keyword id="KW-0771">Synaptosome</keyword>
<sequence>MSGSYDEASEEITDSFWEVGNYKRTVKRIDDGHRLCNDLMSCVQERAKIEKAYAQQLTDWAKRWRQLIEKGPQYGSLERAWGAMMTEADKVSELHQEVKNSLLNEDLEKVKNWQKDAYHKQIMGGFKETKEAEDGFRKAQKPWAKKMKELEAAKKAYHLACKEERLAMTREMNSKTEQSVTPEQQKKLVDKVDKCRQDVQKTQEKYEKVLEDVGKTTPQYMEGMEQVFEQCQQFEEKRLVFLKEVLLDIKRHLNLAENSSYMHVYRELEQAIRGADAQEDLRWFRSTSGPGMPMNWPQFEEWNPDLPHTTAKKEKQPKKAEGATLSNATGAVESTSQAGDRGSVSSYDRGQTYATEWSDDESGNPFGGNEANGGANPFEDDAKGVRVRALYDYDGQEQDELSFKAGDELTKLGEEDEQGWCRGRLDSGQLGLYPANYVEAI</sequence>
<gene>
    <name type="primary">Pacsin1</name>
    <name type="synonym">Pacsin</name>
</gene>